<keyword id="KW-0067">ATP-binding</keyword>
<keyword id="KW-0963">Cytoplasm</keyword>
<keyword id="KW-1015">Disulfide bond</keyword>
<keyword id="KW-0547">Nucleotide-binding</keyword>
<keyword id="KW-0694">RNA-binding</keyword>
<keyword id="KW-0808">Transferase</keyword>
<keyword id="KW-0819">tRNA processing</keyword>
<keyword id="KW-0820">tRNA-binding</keyword>
<accession>A2RLX1</accession>
<sequence>MSGKSPAQTRVVVGMSGGVDSSVTALLLKEQGYDVIGVFMKNWDDTDENGVCTATEDYKDVAAVADQIGVPYYSVNFEKEYWDRVFEYFLAEYRAGRTPNPDVMCNKEIKFKAFLDYAMELGADYVATGHYAQVRTDEDGTVHMLRGADNNKDQTYFLSQLTQEQLKKTMFPLGHLEKPEVRRIAEKAGLATAKKKDSTGICFIGEKNFKKFLGEYLPAQPGKMMTLDGVEMGNHAGLMYYTIGQRGGLGIGGQHGQLTSDPWFVVGKDLTTNTLYVGQGFHHEHLYSTSLDASDLSFTREMPETFDLHCTAKFRYRQEDTGVTIHVNGDKVTVDFDEPVRAITPGQAVVFYDGEECLGGAMIDVAYKEQKVMQYQ</sequence>
<proteinExistence type="inferred from homology"/>
<name>MNMA_LACLM</name>
<protein>
    <recommendedName>
        <fullName evidence="1">tRNA-specific 2-thiouridylase MnmA</fullName>
        <ecNumber evidence="1">2.8.1.13</ecNumber>
    </recommendedName>
</protein>
<reference key="1">
    <citation type="journal article" date="2007" name="J. Bacteriol.">
        <title>The complete genome sequence of the lactic acid bacterial paradigm Lactococcus lactis subsp. cremoris MG1363.</title>
        <authorList>
            <person name="Wegmann U."/>
            <person name="O'Connell-Motherway M."/>
            <person name="Zomer A."/>
            <person name="Buist G."/>
            <person name="Shearman C."/>
            <person name="Canchaya C."/>
            <person name="Ventura M."/>
            <person name="Goesmann A."/>
            <person name="Gasson M.J."/>
            <person name="Kuipers O.P."/>
            <person name="van Sinderen D."/>
            <person name="Kok J."/>
        </authorList>
    </citation>
    <scope>NUCLEOTIDE SEQUENCE [LARGE SCALE GENOMIC DNA]</scope>
    <source>
        <strain>MG1363</strain>
    </source>
</reference>
<evidence type="ECO:0000255" key="1">
    <source>
        <dbReference type="HAMAP-Rule" id="MF_00144"/>
    </source>
</evidence>
<evidence type="ECO:0000305" key="2"/>
<feature type="chain" id="PRO_0000349675" description="tRNA-specific 2-thiouridylase MnmA">
    <location>
        <begin position="1"/>
        <end position="376"/>
    </location>
</feature>
<feature type="region of interest" description="Interaction with target base in tRNA" evidence="1">
    <location>
        <begin position="100"/>
        <end position="102"/>
    </location>
</feature>
<feature type="region of interest" description="Interaction with tRNA" evidence="1">
    <location>
        <begin position="152"/>
        <end position="154"/>
    </location>
</feature>
<feature type="region of interest" description="Interaction with tRNA" evidence="1">
    <location>
        <begin position="315"/>
        <end position="316"/>
    </location>
</feature>
<feature type="active site" description="Nucleophile" evidence="1">
    <location>
        <position position="105"/>
    </location>
</feature>
<feature type="active site" description="Cysteine persulfide intermediate" evidence="1">
    <location>
        <position position="202"/>
    </location>
</feature>
<feature type="binding site" evidence="1">
    <location>
        <begin position="14"/>
        <end position="21"/>
    </location>
    <ligand>
        <name>ATP</name>
        <dbReference type="ChEBI" id="CHEBI:30616"/>
    </ligand>
</feature>
<feature type="binding site" evidence="1">
    <location>
        <position position="40"/>
    </location>
    <ligand>
        <name>ATP</name>
        <dbReference type="ChEBI" id="CHEBI:30616"/>
    </ligand>
</feature>
<feature type="binding site" evidence="1">
    <location>
        <position position="129"/>
    </location>
    <ligand>
        <name>ATP</name>
        <dbReference type="ChEBI" id="CHEBI:30616"/>
    </ligand>
</feature>
<feature type="site" description="Interaction with tRNA" evidence="1">
    <location>
        <position position="130"/>
    </location>
</feature>
<feature type="site" description="Interaction with tRNA" evidence="1">
    <location>
        <position position="347"/>
    </location>
</feature>
<feature type="disulfide bond" description="Alternate" evidence="1">
    <location>
        <begin position="105"/>
        <end position="202"/>
    </location>
</feature>
<gene>
    <name evidence="1" type="primary">mnmA</name>
    <name type="ordered locus">llmg_1725</name>
</gene>
<comment type="function">
    <text evidence="1">Catalyzes the 2-thiolation of uridine at the wobble position (U34) of tRNA, leading to the formation of s(2)U34.</text>
</comment>
<comment type="catalytic activity">
    <reaction evidence="1">
        <text>S-sulfanyl-L-cysteinyl-[protein] + uridine(34) in tRNA + AH2 + ATP = 2-thiouridine(34) in tRNA + L-cysteinyl-[protein] + A + AMP + diphosphate + H(+)</text>
        <dbReference type="Rhea" id="RHEA:47032"/>
        <dbReference type="Rhea" id="RHEA-COMP:10131"/>
        <dbReference type="Rhea" id="RHEA-COMP:11726"/>
        <dbReference type="Rhea" id="RHEA-COMP:11727"/>
        <dbReference type="Rhea" id="RHEA-COMP:11728"/>
        <dbReference type="ChEBI" id="CHEBI:13193"/>
        <dbReference type="ChEBI" id="CHEBI:15378"/>
        <dbReference type="ChEBI" id="CHEBI:17499"/>
        <dbReference type="ChEBI" id="CHEBI:29950"/>
        <dbReference type="ChEBI" id="CHEBI:30616"/>
        <dbReference type="ChEBI" id="CHEBI:33019"/>
        <dbReference type="ChEBI" id="CHEBI:61963"/>
        <dbReference type="ChEBI" id="CHEBI:65315"/>
        <dbReference type="ChEBI" id="CHEBI:87170"/>
        <dbReference type="ChEBI" id="CHEBI:456215"/>
        <dbReference type="EC" id="2.8.1.13"/>
    </reaction>
</comment>
<comment type="subcellular location">
    <subcellularLocation>
        <location evidence="1">Cytoplasm</location>
    </subcellularLocation>
</comment>
<comment type="similarity">
    <text evidence="1">Belongs to the MnmA/TRMU family.</text>
</comment>
<comment type="sequence caution" evidence="2">
    <conflict type="erroneous initiation">
        <sequence resource="EMBL-CDS" id="CAL98297"/>
    </conflict>
</comment>
<organism>
    <name type="scientific">Lactococcus lactis subsp. cremoris (strain MG1363)</name>
    <dbReference type="NCBI Taxonomy" id="416870"/>
    <lineage>
        <taxon>Bacteria</taxon>
        <taxon>Bacillati</taxon>
        <taxon>Bacillota</taxon>
        <taxon>Bacilli</taxon>
        <taxon>Lactobacillales</taxon>
        <taxon>Streptococcaceae</taxon>
        <taxon>Lactococcus</taxon>
        <taxon>Lactococcus cremoris subsp. cremoris</taxon>
    </lineage>
</organism>
<dbReference type="EC" id="2.8.1.13" evidence="1"/>
<dbReference type="EMBL" id="AM406671">
    <property type="protein sequence ID" value="CAL98297.1"/>
    <property type="status" value="ALT_INIT"/>
    <property type="molecule type" value="Genomic_DNA"/>
</dbReference>
<dbReference type="RefSeq" id="WP_041931319.1">
    <property type="nucleotide sequence ID" value="NC_009004.1"/>
</dbReference>
<dbReference type="SMR" id="A2RLX1"/>
<dbReference type="STRING" id="416870.llmg_1725"/>
<dbReference type="KEGG" id="llm:llmg_1725"/>
<dbReference type="eggNOG" id="COG0482">
    <property type="taxonomic scope" value="Bacteria"/>
</dbReference>
<dbReference type="HOGENOM" id="CLU_035188_1_0_9"/>
<dbReference type="OrthoDB" id="9800696at2"/>
<dbReference type="Proteomes" id="UP000000364">
    <property type="component" value="Chromosome"/>
</dbReference>
<dbReference type="GO" id="GO:0005737">
    <property type="term" value="C:cytoplasm"/>
    <property type="evidence" value="ECO:0007669"/>
    <property type="project" value="UniProtKB-SubCell"/>
</dbReference>
<dbReference type="GO" id="GO:0005524">
    <property type="term" value="F:ATP binding"/>
    <property type="evidence" value="ECO:0007669"/>
    <property type="project" value="UniProtKB-KW"/>
</dbReference>
<dbReference type="GO" id="GO:0000049">
    <property type="term" value="F:tRNA binding"/>
    <property type="evidence" value="ECO:0007669"/>
    <property type="project" value="UniProtKB-KW"/>
</dbReference>
<dbReference type="GO" id="GO:0103016">
    <property type="term" value="F:tRNA-uridine 2-sulfurtransferase activity"/>
    <property type="evidence" value="ECO:0007669"/>
    <property type="project" value="UniProtKB-EC"/>
</dbReference>
<dbReference type="GO" id="GO:0002143">
    <property type="term" value="P:tRNA wobble position uridine thiolation"/>
    <property type="evidence" value="ECO:0007669"/>
    <property type="project" value="TreeGrafter"/>
</dbReference>
<dbReference type="CDD" id="cd01998">
    <property type="entry name" value="MnmA_TRMU-like"/>
    <property type="match status" value="1"/>
</dbReference>
<dbReference type="FunFam" id="2.30.30.280:FF:000001">
    <property type="entry name" value="tRNA-specific 2-thiouridylase MnmA"/>
    <property type="match status" value="1"/>
</dbReference>
<dbReference type="FunFam" id="2.40.30.10:FF:000023">
    <property type="entry name" value="tRNA-specific 2-thiouridylase MnmA"/>
    <property type="match status" value="1"/>
</dbReference>
<dbReference type="FunFam" id="3.40.50.620:FF:000004">
    <property type="entry name" value="tRNA-specific 2-thiouridylase MnmA"/>
    <property type="match status" value="1"/>
</dbReference>
<dbReference type="Gene3D" id="2.30.30.280">
    <property type="entry name" value="Adenine nucleotide alpha hydrolases-like domains"/>
    <property type="match status" value="1"/>
</dbReference>
<dbReference type="Gene3D" id="3.40.50.620">
    <property type="entry name" value="HUPs"/>
    <property type="match status" value="1"/>
</dbReference>
<dbReference type="Gene3D" id="2.40.30.10">
    <property type="entry name" value="Translation factors"/>
    <property type="match status" value="1"/>
</dbReference>
<dbReference type="HAMAP" id="MF_00144">
    <property type="entry name" value="tRNA_thiouridyl_MnmA"/>
    <property type="match status" value="1"/>
</dbReference>
<dbReference type="InterPro" id="IPR004506">
    <property type="entry name" value="MnmA-like"/>
</dbReference>
<dbReference type="InterPro" id="IPR046885">
    <property type="entry name" value="MnmA-like_C"/>
</dbReference>
<dbReference type="InterPro" id="IPR046884">
    <property type="entry name" value="MnmA-like_central"/>
</dbReference>
<dbReference type="InterPro" id="IPR023382">
    <property type="entry name" value="MnmA-like_central_sf"/>
</dbReference>
<dbReference type="InterPro" id="IPR014729">
    <property type="entry name" value="Rossmann-like_a/b/a_fold"/>
</dbReference>
<dbReference type="NCBIfam" id="NF001138">
    <property type="entry name" value="PRK00143.1"/>
    <property type="match status" value="1"/>
</dbReference>
<dbReference type="NCBIfam" id="TIGR00420">
    <property type="entry name" value="trmU"/>
    <property type="match status" value="1"/>
</dbReference>
<dbReference type="PANTHER" id="PTHR11933:SF5">
    <property type="entry name" value="MITOCHONDRIAL TRNA-SPECIFIC 2-THIOURIDYLASE 1"/>
    <property type="match status" value="1"/>
</dbReference>
<dbReference type="PANTHER" id="PTHR11933">
    <property type="entry name" value="TRNA 5-METHYLAMINOMETHYL-2-THIOURIDYLATE -METHYLTRANSFERASE"/>
    <property type="match status" value="1"/>
</dbReference>
<dbReference type="Pfam" id="PF03054">
    <property type="entry name" value="tRNA_Me_trans"/>
    <property type="match status" value="1"/>
</dbReference>
<dbReference type="Pfam" id="PF20258">
    <property type="entry name" value="tRNA_Me_trans_C"/>
    <property type="match status" value="1"/>
</dbReference>
<dbReference type="Pfam" id="PF20259">
    <property type="entry name" value="tRNA_Me_trans_M"/>
    <property type="match status" value="1"/>
</dbReference>
<dbReference type="SUPFAM" id="SSF52402">
    <property type="entry name" value="Adenine nucleotide alpha hydrolases-like"/>
    <property type="match status" value="1"/>
</dbReference>